<reference key="1">
    <citation type="journal article" date="2008" name="PLoS ONE">
        <title>Comparative analysis of Acinetobacters: three genomes for three lifestyles.</title>
        <authorList>
            <person name="Vallenet D."/>
            <person name="Nordmann P."/>
            <person name="Barbe V."/>
            <person name="Poirel L."/>
            <person name="Mangenot S."/>
            <person name="Bataille E."/>
            <person name="Dossat C."/>
            <person name="Gas S."/>
            <person name="Kreimeyer A."/>
            <person name="Lenoble P."/>
            <person name="Oztas S."/>
            <person name="Poulain J."/>
            <person name="Segurens B."/>
            <person name="Robert C."/>
            <person name="Abergel C."/>
            <person name="Claverie J.-M."/>
            <person name="Raoult D."/>
            <person name="Medigue C."/>
            <person name="Weissenbach J."/>
            <person name="Cruveiller S."/>
        </authorList>
    </citation>
    <scope>NUCLEOTIDE SEQUENCE [LARGE SCALE GENOMIC DNA]</scope>
    <source>
        <strain>AYE</strain>
    </source>
</reference>
<keyword id="KW-0028">Amino-acid biosynthesis</keyword>
<keyword id="KW-0170">Cobalt</keyword>
<keyword id="KW-0220">Diaminopimelate biosynthesis</keyword>
<keyword id="KW-0378">Hydrolase</keyword>
<keyword id="KW-0457">Lysine biosynthesis</keyword>
<keyword id="KW-0479">Metal-binding</keyword>
<keyword id="KW-0862">Zinc</keyword>
<evidence type="ECO:0000255" key="1">
    <source>
        <dbReference type="HAMAP-Rule" id="MF_01690"/>
    </source>
</evidence>
<proteinExistence type="inferred from homology"/>
<comment type="function">
    <text evidence="1">Catalyzes the hydrolysis of N-succinyl-L,L-diaminopimelic acid (SDAP), forming succinate and LL-2,6-diaminopimelate (DAP), an intermediate involved in the bacterial biosynthesis of lysine and meso-diaminopimelic acid, an essential component of bacterial cell walls.</text>
</comment>
<comment type="catalytic activity">
    <reaction evidence="1">
        <text>N-succinyl-(2S,6S)-2,6-diaminopimelate + H2O = (2S,6S)-2,6-diaminopimelate + succinate</text>
        <dbReference type="Rhea" id="RHEA:22608"/>
        <dbReference type="ChEBI" id="CHEBI:15377"/>
        <dbReference type="ChEBI" id="CHEBI:30031"/>
        <dbReference type="ChEBI" id="CHEBI:57609"/>
        <dbReference type="ChEBI" id="CHEBI:58087"/>
        <dbReference type="EC" id="3.5.1.18"/>
    </reaction>
</comment>
<comment type="cofactor">
    <cofactor evidence="1">
        <name>Zn(2+)</name>
        <dbReference type="ChEBI" id="CHEBI:29105"/>
    </cofactor>
    <cofactor evidence="1">
        <name>Co(2+)</name>
        <dbReference type="ChEBI" id="CHEBI:48828"/>
    </cofactor>
    <text evidence="1">Binds 2 Zn(2+) or Co(2+) ions per subunit.</text>
</comment>
<comment type="pathway">
    <text evidence="1">Amino-acid biosynthesis; L-lysine biosynthesis via DAP pathway; LL-2,6-diaminopimelate from (S)-tetrahydrodipicolinate (succinylase route): step 3/3.</text>
</comment>
<comment type="subunit">
    <text evidence="1">Homodimer.</text>
</comment>
<comment type="similarity">
    <text evidence="1">Belongs to the peptidase M20A family. DapE subfamily.</text>
</comment>
<sequence length="377" mass="41062">MNHSDTLSLSLELLEQPSVTPIDHTCQTIMADRLAKVGFHIEPMRFGDVDNLWARRGTEGPVFCFAGHTDVVPTGRLDAWNSDPFAPEIRDGKLYGRGSADMKTALAAMVVASERFVAKHPNHKGSIAFLITSDEEGPAVNGTVKVIETLEKRNEKITWCLVGEPSSTHKLGDIVKNGRRGSLNAVLKVQGKQGHVAYPHLARNPIHEASPALAELCQTVWDNGNEYFPATSFQISNIHAGTGATNVIPGALEVTFNFRYSTEVTAEQLKQRVHEILDKHGLQYEIVWNLSGLPFLTPVGELVNAAQTAILNVTGTETELSTSGGTSDGRFIAPTGAQVLELGVLNATIHQINEHVDVHDLDPLTDIYEQILENLLA</sequence>
<organism>
    <name type="scientific">Acinetobacter baumannii (strain AYE)</name>
    <dbReference type="NCBI Taxonomy" id="509173"/>
    <lineage>
        <taxon>Bacteria</taxon>
        <taxon>Pseudomonadati</taxon>
        <taxon>Pseudomonadota</taxon>
        <taxon>Gammaproteobacteria</taxon>
        <taxon>Moraxellales</taxon>
        <taxon>Moraxellaceae</taxon>
        <taxon>Acinetobacter</taxon>
        <taxon>Acinetobacter calcoaceticus/baumannii complex</taxon>
    </lineage>
</organism>
<accession>B0V4V8</accession>
<gene>
    <name evidence="1" type="primary">dapE</name>
    <name type="ordered locus">ABAYE0676</name>
</gene>
<name>DAPE_ACIBY</name>
<feature type="chain" id="PRO_0000375446" description="Succinyl-diaminopimelate desuccinylase">
    <location>
        <begin position="1"/>
        <end position="377"/>
    </location>
</feature>
<feature type="active site" evidence="1">
    <location>
        <position position="70"/>
    </location>
</feature>
<feature type="active site" description="Proton acceptor" evidence="1">
    <location>
        <position position="135"/>
    </location>
</feature>
<feature type="binding site" evidence="1">
    <location>
        <position position="68"/>
    </location>
    <ligand>
        <name>Zn(2+)</name>
        <dbReference type="ChEBI" id="CHEBI:29105"/>
        <label>1</label>
    </ligand>
</feature>
<feature type="binding site" evidence="1">
    <location>
        <position position="101"/>
    </location>
    <ligand>
        <name>Zn(2+)</name>
        <dbReference type="ChEBI" id="CHEBI:29105"/>
        <label>1</label>
    </ligand>
</feature>
<feature type="binding site" evidence="1">
    <location>
        <position position="101"/>
    </location>
    <ligand>
        <name>Zn(2+)</name>
        <dbReference type="ChEBI" id="CHEBI:29105"/>
        <label>2</label>
    </ligand>
</feature>
<feature type="binding site" evidence="1">
    <location>
        <position position="136"/>
    </location>
    <ligand>
        <name>Zn(2+)</name>
        <dbReference type="ChEBI" id="CHEBI:29105"/>
        <label>2</label>
    </ligand>
</feature>
<feature type="binding site" evidence="1">
    <location>
        <position position="164"/>
    </location>
    <ligand>
        <name>Zn(2+)</name>
        <dbReference type="ChEBI" id="CHEBI:29105"/>
        <label>1</label>
    </ligand>
</feature>
<feature type="binding site" evidence="1">
    <location>
        <position position="350"/>
    </location>
    <ligand>
        <name>Zn(2+)</name>
        <dbReference type="ChEBI" id="CHEBI:29105"/>
        <label>2</label>
    </ligand>
</feature>
<protein>
    <recommendedName>
        <fullName evidence="1">Succinyl-diaminopimelate desuccinylase</fullName>
        <shortName evidence="1">SDAP desuccinylase</shortName>
        <ecNumber evidence="1">3.5.1.18</ecNumber>
    </recommendedName>
    <alternativeName>
        <fullName evidence="1">N-succinyl-LL-2,6-diaminoheptanedioate amidohydrolase</fullName>
    </alternativeName>
</protein>
<dbReference type="EC" id="3.5.1.18" evidence="1"/>
<dbReference type="EMBL" id="CU459141">
    <property type="protein sequence ID" value="CAM85640.1"/>
    <property type="molecule type" value="Genomic_DNA"/>
</dbReference>
<dbReference type="RefSeq" id="WP_001016570.1">
    <property type="nucleotide sequence ID" value="NZ_JBDGFB010000017.1"/>
</dbReference>
<dbReference type="SMR" id="B0V4V8"/>
<dbReference type="EnsemblBacteria" id="CAM85640">
    <property type="protein sequence ID" value="CAM85640"/>
    <property type="gene ID" value="ABAYE0676"/>
</dbReference>
<dbReference type="KEGG" id="aby:ABAYE0676"/>
<dbReference type="HOGENOM" id="CLU_021802_4_0_6"/>
<dbReference type="UniPathway" id="UPA00034">
    <property type="reaction ID" value="UER00021"/>
</dbReference>
<dbReference type="GO" id="GO:0008777">
    <property type="term" value="F:acetylornithine deacetylase activity"/>
    <property type="evidence" value="ECO:0007669"/>
    <property type="project" value="TreeGrafter"/>
</dbReference>
<dbReference type="GO" id="GO:0050897">
    <property type="term" value="F:cobalt ion binding"/>
    <property type="evidence" value="ECO:0007669"/>
    <property type="project" value="UniProtKB-UniRule"/>
</dbReference>
<dbReference type="GO" id="GO:0009014">
    <property type="term" value="F:succinyl-diaminopimelate desuccinylase activity"/>
    <property type="evidence" value="ECO:0007669"/>
    <property type="project" value="UniProtKB-UniRule"/>
</dbReference>
<dbReference type="GO" id="GO:0008270">
    <property type="term" value="F:zinc ion binding"/>
    <property type="evidence" value="ECO:0007669"/>
    <property type="project" value="UniProtKB-UniRule"/>
</dbReference>
<dbReference type="GO" id="GO:0019877">
    <property type="term" value="P:diaminopimelate biosynthetic process"/>
    <property type="evidence" value="ECO:0007669"/>
    <property type="project" value="UniProtKB-UniRule"/>
</dbReference>
<dbReference type="GO" id="GO:0006526">
    <property type="term" value="P:L-arginine biosynthetic process"/>
    <property type="evidence" value="ECO:0007669"/>
    <property type="project" value="TreeGrafter"/>
</dbReference>
<dbReference type="GO" id="GO:0009089">
    <property type="term" value="P:lysine biosynthetic process via diaminopimelate"/>
    <property type="evidence" value="ECO:0007669"/>
    <property type="project" value="UniProtKB-UniRule"/>
</dbReference>
<dbReference type="CDD" id="cd03891">
    <property type="entry name" value="M20_DapE_proteobac"/>
    <property type="match status" value="1"/>
</dbReference>
<dbReference type="FunFam" id="3.30.70.360:FF:000011">
    <property type="entry name" value="Succinyl-diaminopimelate desuccinylase"/>
    <property type="match status" value="1"/>
</dbReference>
<dbReference type="FunFam" id="3.40.630.10:FF:000005">
    <property type="entry name" value="Succinyl-diaminopimelate desuccinylase"/>
    <property type="match status" value="1"/>
</dbReference>
<dbReference type="Gene3D" id="3.40.630.10">
    <property type="entry name" value="Zn peptidases"/>
    <property type="match status" value="2"/>
</dbReference>
<dbReference type="HAMAP" id="MF_01690">
    <property type="entry name" value="DapE"/>
    <property type="match status" value="1"/>
</dbReference>
<dbReference type="InterPro" id="IPR036264">
    <property type="entry name" value="Bact_exopeptidase_dim_dom"/>
</dbReference>
<dbReference type="InterPro" id="IPR005941">
    <property type="entry name" value="DapE_proteobac"/>
</dbReference>
<dbReference type="InterPro" id="IPR002933">
    <property type="entry name" value="Peptidase_M20"/>
</dbReference>
<dbReference type="InterPro" id="IPR011650">
    <property type="entry name" value="Peptidase_M20_dimer"/>
</dbReference>
<dbReference type="InterPro" id="IPR050072">
    <property type="entry name" value="Peptidase_M20A"/>
</dbReference>
<dbReference type="NCBIfam" id="TIGR01246">
    <property type="entry name" value="dapE_proteo"/>
    <property type="match status" value="1"/>
</dbReference>
<dbReference type="NCBIfam" id="NF009557">
    <property type="entry name" value="PRK13009.1"/>
    <property type="match status" value="1"/>
</dbReference>
<dbReference type="PANTHER" id="PTHR43808">
    <property type="entry name" value="ACETYLORNITHINE DEACETYLASE"/>
    <property type="match status" value="1"/>
</dbReference>
<dbReference type="PANTHER" id="PTHR43808:SF31">
    <property type="entry name" value="N-ACETYL-L-CITRULLINE DEACETYLASE"/>
    <property type="match status" value="1"/>
</dbReference>
<dbReference type="Pfam" id="PF07687">
    <property type="entry name" value="M20_dimer"/>
    <property type="match status" value="1"/>
</dbReference>
<dbReference type="Pfam" id="PF01546">
    <property type="entry name" value="Peptidase_M20"/>
    <property type="match status" value="1"/>
</dbReference>
<dbReference type="SUPFAM" id="SSF55031">
    <property type="entry name" value="Bacterial exopeptidase dimerisation domain"/>
    <property type="match status" value="1"/>
</dbReference>
<dbReference type="SUPFAM" id="SSF53187">
    <property type="entry name" value="Zn-dependent exopeptidases"/>
    <property type="match status" value="1"/>
</dbReference>